<reference key="1">
    <citation type="journal article" date="2005" name="Nat. Biotechnol.">
        <title>Complete genome sequence of the plant commensal Pseudomonas fluorescens Pf-5.</title>
        <authorList>
            <person name="Paulsen I.T."/>
            <person name="Press C.M."/>
            <person name="Ravel J."/>
            <person name="Kobayashi D.Y."/>
            <person name="Myers G.S.A."/>
            <person name="Mavrodi D.V."/>
            <person name="DeBoy R.T."/>
            <person name="Seshadri R."/>
            <person name="Ren Q."/>
            <person name="Madupu R."/>
            <person name="Dodson R.J."/>
            <person name="Durkin A.S."/>
            <person name="Brinkac L.M."/>
            <person name="Daugherty S.C."/>
            <person name="Sullivan S.A."/>
            <person name="Rosovitz M.J."/>
            <person name="Gwinn M.L."/>
            <person name="Zhou L."/>
            <person name="Schneider D.J."/>
            <person name="Cartinhour S.W."/>
            <person name="Nelson W.C."/>
            <person name="Weidman J."/>
            <person name="Watkins K."/>
            <person name="Tran K."/>
            <person name="Khouri H."/>
            <person name="Pierson E.A."/>
            <person name="Pierson L.S. III"/>
            <person name="Thomashow L.S."/>
            <person name="Loper J.E."/>
        </authorList>
    </citation>
    <scope>NUCLEOTIDE SEQUENCE [LARGE SCALE GENOMIC DNA]</scope>
    <source>
        <strain>ATCC BAA-477 / NRRL B-23932 / Pf-5</strain>
    </source>
</reference>
<organism>
    <name type="scientific">Pseudomonas fluorescens (strain ATCC BAA-477 / NRRL B-23932 / Pf-5)</name>
    <dbReference type="NCBI Taxonomy" id="220664"/>
    <lineage>
        <taxon>Bacteria</taxon>
        <taxon>Pseudomonadati</taxon>
        <taxon>Pseudomonadota</taxon>
        <taxon>Gammaproteobacteria</taxon>
        <taxon>Pseudomonadales</taxon>
        <taxon>Pseudomonadaceae</taxon>
        <taxon>Pseudomonas</taxon>
    </lineage>
</organism>
<accession>Q4KIX1</accession>
<dbReference type="EC" id="2.1.1.-" evidence="1"/>
<dbReference type="EMBL" id="CP000076">
    <property type="protein sequence ID" value="AAY96077.1"/>
    <property type="molecule type" value="Genomic_DNA"/>
</dbReference>
<dbReference type="RefSeq" id="WP_011059039.1">
    <property type="nucleotide sequence ID" value="NC_004129.6"/>
</dbReference>
<dbReference type="SMR" id="Q4KIX1"/>
<dbReference type="STRING" id="220664.PFL_0670"/>
<dbReference type="GeneID" id="57473662"/>
<dbReference type="KEGG" id="pfl:PFL_0670"/>
<dbReference type="PATRIC" id="fig|220664.5.peg.690"/>
<dbReference type="eggNOG" id="COG2264">
    <property type="taxonomic scope" value="Bacteria"/>
</dbReference>
<dbReference type="HOGENOM" id="CLU_049382_4_1_6"/>
<dbReference type="Proteomes" id="UP000008540">
    <property type="component" value="Chromosome"/>
</dbReference>
<dbReference type="GO" id="GO:0005829">
    <property type="term" value="C:cytosol"/>
    <property type="evidence" value="ECO:0007669"/>
    <property type="project" value="TreeGrafter"/>
</dbReference>
<dbReference type="GO" id="GO:0016279">
    <property type="term" value="F:protein-lysine N-methyltransferase activity"/>
    <property type="evidence" value="ECO:0007669"/>
    <property type="project" value="TreeGrafter"/>
</dbReference>
<dbReference type="GO" id="GO:0032259">
    <property type="term" value="P:methylation"/>
    <property type="evidence" value="ECO:0007669"/>
    <property type="project" value="UniProtKB-KW"/>
</dbReference>
<dbReference type="Gene3D" id="3.40.50.150">
    <property type="entry name" value="Vaccinia Virus protein VP39"/>
    <property type="match status" value="1"/>
</dbReference>
<dbReference type="HAMAP" id="MF_00735">
    <property type="entry name" value="Methyltr_PrmA"/>
    <property type="match status" value="1"/>
</dbReference>
<dbReference type="InterPro" id="IPR050078">
    <property type="entry name" value="Ribosomal_L11_MeTrfase_PrmA"/>
</dbReference>
<dbReference type="InterPro" id="IPR004498">
    <property type="entry name" value="Ribosomal_PrmA_MeTrfase"/>
</dbReference>
<dbReference type="InterPro" id="IPR029063">
    <property type="entry name" value="SAM-dependent_MTases_sf"/>
</dbReference>
<dbReference type="NCBIfam" id="TIGR00406">
    <property type="entry name" value="prmA"/>
    <property type="match status" value="1"/>
</dbReference>
<dbReference type="PANTHER" id="PTHR43648">
    <property type="entry name" value="ELECTRON TRANSFER FLAVOPROTEIN BETA SUBUNIT LYSINE METHYLTRANSFERASE"/>
    <property type="match status" value="1"/>
</dbReference>
<dbReference type="PANTHER" id="PTHR43648:SF1">
    <property type="entry name" value="ELECTRON TRANSFER FLAVOPROTEIN BETA SUBUNIT LYSINE METHYLTRANSFERASE"/>
    <property type="match status" value="1"/>
</dbReference>
<dbReference type="Pfam" id="PF06325">
    <property type="entry name" value="PrmA"/>
    <property type="match status" value="1"/>
</dbReference>
<dbReference type="PIRSF" id="PIRSF000401">
    <property type="entry name" value="RPL11_MTase"/>
    <property type="match status" value="1"/>
</dbReference>
<dbReference type="SUPFAM" id="SSF53335">
    <property type="entry name" value="S-adenosyl-L-methionine-dependent methyltransferases"/>
    <property type="match status" value="1"/>
</dbReference>
<keyword id="KW-0963">Cytoplasm</keyword>
<keyword id="KW-0489">Methyltransferase</keyword>
<keyword id="KW-0949">S-adenosyl-L-methionine</keyword>
<keyword id="KW-0808">Transferase</keyword>
<protein>
    <recommendedName>
        <fullName evidence="1">Ribosomal protein L11 methyltransferase</fullName>
        <shortName evidence="1">L11 Mtase</shortName>
        <ecNumber evidence="1">2.1.1.-</ecNumber>
    </recommendedName>
</protein>
<proteinExistence type="inferred from homology"/>
<name>PRMA_PSEF5</name>
<sequence>MPWLQVRLAISPEQAETYEDAFLEVGAVSVTFMDAEDQPIFEPELNTTPLWSHTHLLALFEGGTEAASVLAHMELLTGGPLPEHHSEVIEDQDWERSWMDNFQPMRFGQRLWIVPSWHAAPEPEAVNLLLDPGLAFGTGTHPTTALCLEWLDGQDLKDCNVLDFGCGSGILAIAALLLGAKQAVGTDIDVQALEASRDNAGRNGIADELFPLYLPEQLPQVQADVLVANILAGPLVALAPQLSGLVKSGGRLALSGILAEQGEEVAAAYAQDFDLDPIATLDGWVRITGRRR</sequence>
<feature type="chain" id="PRO_1000046067" description="Ribosomal protein L11 methyltransferase">
    <location>
        <begin position="1"/>
        <end position="292"/>
    </location>
</feature>
<feature type="binding site" evidence="1">
    <location>
        <position position="144"/>
    </location>
    <ligand>
        <name>S-adenosyl-L-methionine</name>
        <dbReference type="ChEBI" id="CHEBI:59789"/>
    </ligand>
</feature>
<feature type="binding site" evidence="1">
    <location>
        <position position="165"/>
    </location>
    <ligand>
        <name>S-adenosyl-L-methionine</name>
        <dbReference type="ChEBI" id="CHEBI:59789"/>
    </ligand>
</feature>
<feature type="binding site" evidence="1">
    <location>
        <position position="187"/>
    </location>
    <ligand>
        <name>S-adenosyl-L-methionine</name>
        <dbReference type="ChEBI" id="CHEBI:59789"/>
    </ligand>
</feature>
<feature type="binding site" evidence="1">
    <location>
        <position position="229"/>
    </location>
    <ligand>
        <name>S-adenosyl-L-methionine</name>
        <dbReference type="ChEBI" id="CHEBI:59789"/>
    </ligand>
</feature>
<gene>
    <name evidence="1" type="primary">prmA</name>
    <name type="ordered locus">PFL_0670</name>
</gene>
<evidence type="ECO:0000255" key="1">
    <source>
        <dbReference type="HAMAP-Rule" id="MF_00735"/>
    </source>
</evidence>
<comment type="function">
    <text evidence="1">Methylates ribosomal protein L11.</text>
</comment>
<comment type="catalytic activity">
    <reaction evidence="1">
        <text>L-lysyl-[protein] + 3 S-adenosyl-L-methionine = N(6),N(6),N(6)-trimethyl-L-lysyl-[protein] + 3 S-adenosyl-L-homocysteine + 3 H(+)</text>
        <dbReference type="Rhea" id="RHEA:54192"/>
        <dbReference type="Rhea" id="RHEA-COMP:9752"/>
        <dbReference type="Rhea" id="RHEA-COMP:13826"/>
        <dbReference type="ChEBI" id="CHEBI:15378"/>
        <dbReference type="ChEBI" id="CHEBI:29969"/>
        <dbReference type="ChEBI" id="CHEBI:57856"/>
        <dbReference type="ChEBI" id="CHEBI:59789"/>
        <dbReference type="ChEBI" id="CHEBI:61961"/>
    </reaction>
</comment>
<comment type="subcellular location">
    <subcellularLocation>
        <location evidence="1">Cytoplasm</location>
    </subcellularLocation>
</comment>
<comment type="similarity">
    <text evidence="1">Belongs to the methyltransferase superfamily. PrmA family.</text>
</comment>